<sequence>MTTNYIFVTGGVVSSLGKGIAAASLAAILEARGLNVTIMKLDPYINVDPGTMSPTQHGEVFVTEDGAETDLDLGHYERFIRTKMTRRNNFTTGRIYSEVLRKERRGDYLGATIQVIPHITNAIKERIIEGGEGHDVVLVEIGGTVGDIESLPFLEAIRQMAVDVGREHTLYMHLTLVPYLAAAGEVKTKPTQHSVKELLSIGIQPDVLICRSDRAVPANERAKIALFCNVPEKAVISLKDVDSIYKIPGLLKSQGLDDYICKRFSLTCPEANLAEWEQVLYEESNPGGEVTIGMIGKYVELPDAYKSVIEALKHGGLKNRLTVNIKLIDSQDVETRGEEMLKELDAILIPGGFGYRGVEGKVLAARYAREHNIPYLGICLGMQVALMEFARNVAGMENANSTEFVPDCKYPVVALITEWRDEDGNVEIRTEESDLGGTMRVGGQQCHLTEGSLVRQMYGEPTIVERHRHRYEVNNMLLKQIEAAGLRVAGRSADNKLVEIIELPDHPWFVACQFHPEFTSTPRDGHPLFAGFVKAAGDYQKRQVK</sequence>
<reference key="1">
    <citation type="journal article" date="2007" name="PLoS Genet.">
        <title>The complete genome sequence of Yersinia pseudotuberculosis IP31758, the causative agent of Far East scarlet-like fever.</title>
        <authorList>
            <person name="Eppinger M."/>
            <person name="Rosovitz M.J."/>
            <person name="Fricke W.F."/>
            <person name="Rasko D.A."/>
            <person name="Kokorina G."/>
            <person name="Fayolle C."/>
            <person name="Lindler L.E."/>
            <person name="Carniel E."/>
            <person name="Ravel J."/>
        </authorList>
    </citation>
    <scope>NUCLEOTIDE SEQUENCE [LARGE SCALE GENOMIC DNA]</scope>
    <source>
        <strain>IP 31758</strain>
    </source>
</reference>
<proteinExistence type="inferred from homology"/>
<comment type="function">
    <text evidence="1">Catalyzes the ATP-dependent amination of UTP to CTP with either L-glutamine or ammonia as the source of nitrogen. Regulates intracellular CTP levels through interactions with the four ribonucleotide triphosphates.</text>
</comment>
<comment type="catalytic activity">
    <reaction evidence="1">
        <text>UTP + L-glutamine + ATP + H2O = CTP + L-glutamate + ADP + phosphate + 2 H(+)</text>
        <dbReference type="Rhea" id="RHEA:26426"/>
        <dbReference type="ChEBI" id="CHEBI:15377"/>
        <dbReference type="ChEBI" id="CHEBI:15378"/>
        <dbReference type="ChEBI" id="CHEBI:29985"/>
        <dbReference type="ChEBI" id="CHEBI:30616"/>
        <dbReference type="ChEBI" id="CHEBI:37563"/>
        <dbReference type="ChEBI" id="CHEBI:43474"/>
        <dbReference type="ChEBI" id="CHEBI:46398"/>
        <dbReference type="ChEBI" id="CHEBI:58359"/>
        <dbReference type="ChEBI" id="CHEBI:456216"/>
        <dbReference type="EC" id="6.3.4.2"/>
    </reaction>
</comment>
<comment type="catalytic activity">
    <reaction evidence="1">
        <text>L-glutamine + H2O = L-glutamate + NH4(+)</text>
        <dbReference type="Rhea" id="RHEA:15889"/>
        <dbReference type="ChEBI" id="CHEBI:15377"/>
        <dbReference type="ChEBI" id="CHEBI:28938"/>
        <dbReference type="ChEBI" id="CHEBI:29985"/>
        <dbReference type="ChEBI" id="CHEBI:58359"/>
    </reaction>
</comment>
<comment type="catalytic activity">
    <reaction evidence="1">
        <text>UTP + NH4(+) + ATP = CTP + ADP + phosphate + 2 H(+)</text>
        <dbReference type="Rhea" id="RHEA:16597"/>
        <dbReference type="ChEBI" id="CHEBI:15378"/>
        <dbReference type="ChEBI" id="CHEBI:28938"/>
        <dbReference type="ChEBI" id="CHEBI:30616"/>
        <dbReference type="ChEBI" id="CHEBI:37563"/>
        <dbReference type="ChEBI" id="CHEBI:43474"/>
        <dbReference type="ChEBI" id="CHEBI:46398"/>
        <dbReference type="ChEBI" id="CHEBI:456216"/>
    </reaction>
</comment>
<comment type="activity regulation">
    <text evidence="1">Allosterically activated by GTP, when glutamine is the substrate; GTP has no effect on the reaction when ammonia is the substrate. The allosteric effector GTP functions by stabilizing the protein conformation that binds the tetrahedral intermediate(s) formed during glutamine hydrolysis. Inhibited by the product CTP, via allosteric rather than competitive inhibition.</text>
</comment>
<comment type="pathway">
    <text evidence="1">Pyrimidine metabolism; CTP biosynthesis via de novo pathway; CTP from UDP: step 2/2.</text>
</comment>
<comment type="subunit">
    <text evidence="1">Homotetramer.</text>
</comment>
<comment type="miscellaneous">
    <text evidence="1">CTPSs have evolved a hybrid strategy for distinguishing between UTP and CTP. The overlapping regions of the product feedback inhibitory and substrate sites recognize a common feature in both compounds, the triphosphate moiety. To differentiate isosteric substrate and product pyrimidine rings, an additional pocket far from the expected kinase/ligase catalytic site, specifically recognizes the cytosine and ribose portions of the product inhibitor.</text>
</comment>
<comment type="similarity">
    <text evidence="1">Belongs to the CTP synthase family.</text>
</comment>
<name>PYRG_YERP3</name>
<keyword id="KW-0067">ATP-binding</keyword>
<keyword id="KW-0315">Glutamine amidotransferase</keyword>
<keyword id="KW-0436">Ligase</keyword>
<keyword id="KW-0460">Magnesium</keyword>
<keyword id="KW-0479">Metal-binding</keyword>
<keyword id="KW-0547">Nucleotide-binding</keyword>
<keyword id="KW-0665">Pyrimidine biosynthesis</keyword>
<accession>A7FLZ6</accession>
<gene>
    <name evidence="1" type="primary">pyrG</name>
    <name type="ordered locus">YpsIP31758_3317</name>
</gene>
<dbReference type="EC" id="6.3.4.2" evidence="1"/>
<dbReference type="EMBL" id="CP000720">
    <property type="protein sequence ID" value="ABS48179.1"/>
    <property type="molecule type" value="Genomic_DNA"/>
</dbReference>
<dbReference type="RefSeq" id="WP_002209376.1">
    <property type="nucleotide sequence ID" value="NC_009708.1"/>
</dbReference>
<dbReference type="SMR" id="A7FLZ6"/>
<dbReference type="GeneID" id="96664251"/>
<dbReference type="KEGG" id="ypi:YpsIP31758_3317"/>
<dbReference type="HOGENOM" id="CLU_011675_5_0_6"/>
<dbReference type="UniPathway" id="UPA00159">
    <property type="reaction ID" value="UER00277"/>
</dbReference>
<dbReference type="Proteomes" id="UP000002412">
    <property type="component" value="Chromosome"/>
</dbReference>
<dbReference type="GO" id="GO:0005829">
    <property type="term" value="C:cytosol"/>
    <property type="evidence" value="ECO:0007669"/>
    <property type="project" value="TreeGrafter"/>
</dbReference>
<dbReference type="GO" id="GO:0005524">
    <property type="term" value="F:ATP binding"/>
    <property type="evidence" value="ECO:0007669"/>
    <property type="project" value="UniProtKB-KW"/>
</dbReference>
<dbReference type="GO" id="GO:0003883">
    <property type="term" value="F:CTP synthase activity"/>
    <property type="evidence" value="ECO:0007669"/>
    <property type="project" value="UniProtKB-UniRule"/>
</dbReference>
<dbReference type="GO" id="GO:0004359">
    <property type="term" value="F:glutaminase activity"/>
    <property type="evidence" value="ECO:0007669"/>
    <property type="project" value="RHEA"/>
</dbReference>
<dbReference type="GO" id="GO:0042802">
    <property type="term" value="F:identical protein binding"/>
    <property type="evidence" value="ECO:0007669"/>
    <property type="project" value="TreeGrafter"/>
</dbReference>
<dbReference type="GO" id="GO:0046872">
    <property type="term" value="F:metal ion binding"/>
    <property type="evidence" value="ECO:0007669"/>
    <property type="project" value="UniProtKB-KW"/>
</dbReference>
<dbReference type="GO" id="GO:0044210">
    <property type="term" value="P:'de novo' CTP biosynthetic process"/>
    <property type="evidence" value="ECO:0007669"/>
    <property type="project" value="UniProtKB-UniRule"/>
</dbReference>
<dbReference type="GO" id="GO:0019856">
    <property type="term" value="P:pyrimidine nucleobase biosynthetic process"/>
    <property type="evidence" value="ECO:0007669"/>
    <property type="project" value="TreeGrafter"/>
</dbReference>
<dbReference type="CDD" id="cd03113">
    <property type="entry name" value="CTPS_N"/>
    <property type="match status" value="1"/>
</dbReference>
<dbReference type="CDD" id="cd01746">
    <property type="entry name" value="GATase1_CTP_Synthase"/>
    <property type="match status" value="1"/>
</dbReference>
<dbReference type="FunFam" id="3.40.50.300:FF:000009">
    <property type="entry name" value="CTP synthase"/>
    <property type="match status" value="1"/>
</dbReference>
<dbReference type="FunFam" id="3.40.50.880:FF:000002">
    <property type="entry name" value="CTP synthase"/>
    <property type="match status" value="1"/>
</dbReference>
<dbReference type="Gene3D" id="3.40.50.880">
    <property type="match status" value="1"/>
</dbReference>
<dbReference type="Gene3D" id="3.40.50.300">
    <property type="entry name" value="P-loop containing nucleotide triphosphate hydrolases"/>
    <property type="match status" value="1"/>
</dbReference>
<dbReference type="HAMAP" id="MF_01227">
    <property type="entry name" value="PyrG"/>
    <property type="match status" value="1"/>
</dbReference>
<dbReference type="InterPro" id="IPR029062">
    <property type="entry name" value="Class_I_gatase-like"/>
</dbReference>
<dbReference type="InterPro" id="IPR004468">
    <property type="entry name" value="CTP_synthase"/>
</dbReference>
<dbReference type="InterPro" id="IPR017456">
    <property type="entry name" value="CTP_synthase_N"/>
</dbReference>
<dbReference type="InterPro" id="IPR017926">
    <property type="entry name" value="GATASE"/>
</dbReference>
<dbReference type="InterPro" id="IPR033828">
    <property type="entry name" value="GATase1_CTP_Synthase"/>
</dbReference>
<dbReference type="InterPro" id="IPR027417">
    <property type="entry name" value="P-loop_NTPase"/>
</dbReference>
<dbReference type="NCBIfam" id="NF003792">
    <property type="entry name" value="PRK05380.1"/>
    <property type="match status" value="1"/>
</dbReference>
<dbReference type="NCBIfam" id="TIGR00337">
    <property type="entry name" value="PyrG"/>
    <property type="match status" value="1"/>
</dbReference>
<dbReference type="PANTHER" id="PTHR11550">
    <property type="entry name" value="CTP SYNTHASE"/>
    <property type="match status" value="1"/>
</dbReference>
<dbReference type="PANTHER" id="PTHR11550:SF0">
    <property type="entry name" value="CTP SYNTHASE-RELATED"/>
    <property type="match status" value="1"/>
</dbReference>
<dbReference type="Pfam" id="PF06418">
    <property type="entry name" value="CTP_synth_N"/>
    <property type="match status" value="1"/>
</dbReference>
<dbReference type="Pfam" id="PF00117">
    <property type="entry name" value="GATase"/>
    <property type="match status" value="1"/>
</dbReference>
<dbReference type="SUPFAM" id="SSF52317">
    <property type="entry name" value="Class I glutamine amidotransferase-like"/>
    <property type="match status" value="1"/>
</dbReference>
<dbReference type="SUPFAM" id="SSF52540">
    <property type="entry name" value="P-loop containing nucleoside triphosphate hydrolases"/>
    <property type="match status" value="1"/>
</dbReference>
<dbReference type="PROSITE" id="PS51273">
    <property type="entry name" value="GATASE_TYPE_1"/>
    <property type="match status" value="1"/>
</dbReference>
<feature type="chain" id="PRO_1000139607" description="CTP synthase">
    <location>
        <begin position="1"/>
        <end position="545"/>
    </location>
</feature>
<feature type="domain" description="Glutamine amidotransferase type-1" evidence="1">
    <location>
        <begin position="291"/>
        <end position="542"/>
    </location>
</feature>
<feature type="region of interest" description="Amidoligase domain" evidence="1">
    <location>
        <begin position="1"/>
        <end position="266"/>
    </location>
</feature>
<feature type="active site" description="Nucleophile; for glutamine hydrolysis" evidence="1">
    <location>
        <position position="379"/>
    </location>
</feature>
<feature type="active site" evidence="1">
    <location>
        <position position="515"/>
    </location>
</feature>
<feature type="active site" evidence="1">
    <location>
        <position position="517"/>
    </location>
</feature>
<feature type="binding site" evidence="1">
    <location>
        <position position="14"/>
    </location>
    <ligand>
        <name>CTP</name>
        <dbReference type="ChEBI" id="CHEBI:37563"/>
        <note>allosteric inhibitor</note>
    </ligand>
</feature>
<feature type="binding site" evidence="1">
    <location>
        <position position="14"/>
    </location>
    <ligand>
        <name>UTP</name>
        <dbReference type="ChEBI" id="CHEBI:46398"/>
    </ligand>
</feature>
<feature type="binding site" evidence="1">
    <location>
        <begin position="15"/>
        <end position="20"/>
    </location>
    <ligand>
        <name>ATP</name>
        <dbReference type="ChEBI" id="CHEBI:30616"/>
    </ligand>
</feature>
<feature type="binding site" evidence="1">
    <location>
        <position position="72"/>
    </location>
    <ligand>
        <name>ATP</name>
        <dbReference type="ChEBI" id="CHEBI:30616"/>
    </ligand>
</feature>
<feature type="binding site" evidence="1">
    <location>
        <position position="72"/>
    </location>
    <ligand>
        <name>Mg(2+)</name>
        <dbReference type="ChEBI" id="CHEBI:18420"/>
    </ligand>
</feature>
<feature type="binding site" evidence="1">
    <location>
        <position position="140"/>
    </location>
    <ligand>
        <name>Mg(2+)</name>
        <dbReference type="ChEBI" id="CHEBI:18420"/>
    </ligand>
</feature>
<feature type="binding site" evidence="1">
    <location>
        <begin position="147"/>
        <end position="149"/>
    </location>
    <ligand>
        <name>CTP</name>
        <dbReference type="ChEBI" id="CHEBI:37563"/>
        <note>allosteric inhibitor</note>
    </ligand>
</feature>
<feature type="binding site" evidence="1">
    <location>
        <begin position="187"/>
        <end position="192"/>
    </location>
    <ligand>
        <name>CTP</name>
        <dbReference type="ChEBI" id="CHEBI:37563"/>
        <note>allosteric inhibitor</note>
    </ligand>
</feature>
<feature type="binding site" evidence="1">
    <location>
        <begin position="187"/>
        <end position="192"/>
    </location>
    <ligand>
        <name>UTP</name>
        <dbReference type="ChEBI" id="CHEBI:46398"/>
    </ligand>
</feature>
<feature type="binding site" evidence="1">
    <location>
        <position position="223"/>
    </location>
    <ligand>
        <name>CTP</name>
        <dbReference type="ChEBI" id="CHEBI:37563"/>
        <note>allosteric inhibitor</note>
    </ligand>
</feature>
<feature type="binding site" evidence="1">
    <location>
        <position position="223"/>
    </location>
    <ligand>
        <name>UTP</name>
        <dbReference type="ChEBI" id="CHEBI:46398"/>
    </ligand>
</feature>
<feature type="binding site" evidence="1">
    <location>
        <begin position="239"/>
        <end position="241"/>
    </location>
    <ligand>
        <name>ATP</name>
        <dbReference type="ChEBI" id="CHEBI:30616"/>
    </ligand>
</feature>
<feature type="binding site" evidence="1">
    <location>
        <position position="352"/>
    </location>
    <ligand>
        <name>L-glutamine</name>
        <dbReference type="ChEBI" id="CHEBI:58359"/>
    </ligand>
</feature>
<feature type="binding site" evidence="1">
    <location>
        <begin position="380"/>
        <end position="383"/>
    </location>
    <ligand>
        <name>L-glutamine</name>
        <dbReference type="ChEBI" id="CHEBI:58359"/>
    </ligand>
</feature>
<feature type="binding site" evidence="1">
    <location>
        <position position="403"/>
    </location>
    <ligand>
        <name>L-glutamine</name>
        <dbReference type="ChEBI" id="CHEBI:58359"/>
    </ligand>
</feature>
<feature type="binding site" evidence="1">
    <location>
        <position position="470"/>
    </location>
    <ligand>
        <name>L-glutamine</name>
        <dbReference type="ChEBI" id="CHEBI:58359"/>
    </ligand>
</feature>
<evidence type="ECO:0000255" key="1">
    <source>
        <dbReference type="HAMAP-Rule" id="MF_01227"/>
    </source>
</evidence>
<organism>
    <name type="scientific">Yersinia pseudotuberculosis serotype O:1b (strain IP 31758)</name>
    <dbReference type="NCBI Taxonomy" id="349747"/>
    <lineage>
        <taxon>Bacteria</taxon>
        <taxon>Pseudomonadati</taxon>
        <taxon>Pseudomonadota</taxon>
        <taxon>Gammaproteobacteria</taxon>
        <taxon>Enterobacterales</taxon>
        <taxon>Yersiniaceae</taxon>
        <taxon>Yersinia</taxon>
    </lineage>
</organism>
<protein>
    <recommendedName>
        <fullName evidence="1">CTP synthase</fullName>
        <ecNumber evidence="1">6.3.4.2</ecNumber>
    </recommendedName>
    <alternativeName>
        <fullName evidence="1">Cytidine 5'-triphosphate synthase</fullName>
    </alternativeName>
    <alternativeName>
        <fullName evidence="1">Cytidine triphosphate synthetase</fullName>
        <shortName evidence="1">CTP synthetase</shortName>
        <shortName evidence="1">CTPS</shortName>
    </alternativeName>
    <alternativeName>
        <fullName evidence="1">UTP--ammonia ligase</fullName>
    </alternativeName>
</protein>